<gene>
    <name evidence="1" type="primary">pepA</name>
    <name type="ordered locus">Mkms_3372</name>
</gene>
<organism>
    <name type="scientific">Mycobacterium sp. (strain KMS)</name>
    <dbReference type="NCBI Taxonomy" id="189918"/>
    <lineage>
        <taxon>Bacteria</taxon>
        <taxon>Bacillati</taxon>
        <taxon>Actinomycetota</taxon>
        <taxon>Actinomycetes</taxon>
        <taxon>Mycobacteriales</taxon>
        <taxon>Mycobacteriaceae</taxon>
        <taxon>Mycobacterium</taxon>
    </lineage>
</organism>
<reference key="1">
    <citation type="submission" date="2006-12" db="EMBL/GenBank/DDBJ databases">
        <title>Complete sequence of chromosome of Mycobacterium sp. KMS.</title>
        <authorList>
            <consortium name="US DOE Joint Genome Institute"/>
            <person name="Copeland A."/>
            <person name="Lucas S."/>
            <person name="Lapidus A."/>
            <person name="Barry K."/>
            <person name="Detter J.C."/>
            <person name="Glavina del Rio T."/>
            <person name="Hammon N."/>
            <person name="Israni S."/>
            <person name="Dalin E."/>
            <person name="Tice H."/>
            <person name="Pitluck S."/>
            <person name="Kiss H."/>
            <person name="Brettin T."/>
            <person name="Bruce D."/>
            <person name="Han C."/>
            <person name="Tapia R."/>
            <person name="Gilna P."/>
            <person name="Schmutz J."/>
            <person name="Larimer F."/>
            <person name="Land M."/>
            <person name="Hauser L."/>
            <person name="Kyrpides N."/>
            <person name="Mikhailova N."/>
            <person name="Miller C.D."/>
            <person name="Richardson P."/>
        </authorList>
    </citation>
    <scope>NUCLEOTIDE SEQUENCE [LARGE SCALE GENOMIC DNA]</scope>
    <source>
        <strain>KMS</strain>
    </source>
</reference>
<sequence length="513" mass="53339">MSSDPGYQAPVVTVSSSIPRRGVGDSVLIVPVVTRDDAAAVLAAAPFLDKDAVREIEAALKSLGATGGEGQTHRLVVSALPVASVLTIGLGKERDEWPADTVRRVAGNAARSLDKVAAVLTTLSALDLEAAIEGLILGSYRFTEFRSAKTAPKDGGLRAITALSQESKSRARDAAQRATDIATAVATARDFVNTPPSHLYPDEFAKRAKALGEAAGLEVEILDDKALVKAGYGGIVGVGKGSSRPPRLVRLSHKGAVRTRTRGARPGGSKRVALVGKGITFDTGGISIKPAANMHHMTSDMGGAAAVIATVVLAAKQKLPIDVIATVPMAENMPSATAQRPGDVLTQYGGTTVEVLNTDAEGRLILADAIVRACEDNPDYLIETSTLTGAQTVALGSRTPGVMGSDAFRDRVATLSQQVGENAWAMPLPEELKDDLKSTVADLANVSGSRFAGMLVAGTYLREFVADGVEWAHIDVAAPAYNSGGPWGYTPKGGTGVPTRTMFAVLEEIAREG</sequence>
<protein>
    <recommendedName>
        <fullName evidence="1">Probable cytosol aminopeptidase</fullName>
        <ecNumber evidence="1">3.4.11.1</ecNumber>
    </recommendedName>
    <alternativeName>
        <fullName evidence="1">Leucine aminopeptidase</fullName>
        <shortName evidence="1">LAP</shortName>
        <ecNumber evidence="1">3.4.11.10</ecNumber>
    </alternativeName>
    <alternativeName>
        <fullName evidence="1">Leucyl aminopeptidase</fullName>
    </alternativeName>
</protein>
<name>AMPA_MYCSK</name>
<feature type="chain" id="PRO_1000019938" description="Probable cytosol aminopeptidase">
    <location>
        <begin position="1"/>
        <end position="513"/>
    </location>
</feature>
<feature type="active site" evidence="1">
    <location>
        <position position="289"/>
    </location>
</feature>
<feature type="active site" evidence="1">
    <location>
        <position position="363"/>
    </location>
</feature>
<feature type="binding site" evidence="1">
    <location>
        <position position="277"/>
    </location>
    <ligand>
        <name>Mn(2+)</name>
        <dbReference type="ChEBI" id="CHEBI:29035"/>
        <label>2</label>
    </ligand>
</feature>
<feature type="binding site" evidence="1">
    <location>
        <position position="282"/>
    </location>
    <ligand>
        <name>Mn(2+)</name>
        <dbReference type="ChEBI" id="CHEBI:29035"/>
        <label>1</label>
    </ligand>
</feature>
<feature type="binding site" evidence="1">
    <location>
        <position position="282"/>
    </location>
    <ligand>
        <name>Mn(2+)</name>
        <dbReference type="ChEBI" id="CHEBI:29035"/>
        <label>2</label>
    </ligand>
</feature>
<feature type="binding site" evidence="1">
    <location>
        <position position="300"/>
    </location>
    <ligand>
        <name>Mn(2+)</name>
        <dbReference type="ChEBI" id="CHEBI:29035"/>
        <label>2</label>
    </ligand>
</feature>
<feature type="binding site" evidence="1">
    <location>
        <position position="359"/>
    </location>
    <ligand>
        <name>Mn(2+)</name>
        <dbReference type="ChEBI" id="CHEBI:29035"/>
        <label>1</label>
    </ligand>
</feature>
<feature type="binding site" evidence="1">
    <location>
        <position position="361"/>
    </location>
    <ligand>
        <name>Mn(2+)</name>
        <dbReference type="ChEBI" id="CHEBI:29035"/>
        <label>1</label>
    </ligand>
</feature>
<feature type="binding site" evidence="1">
    <location>
        <position position="361"/>
    </location>
    <ligand>
        <name>Mn(2+)</name>
        <dbReference type="ChEBI" id="CHEBI:29035"/>
        <label>2</label>
    </ligand>
</feature>
<comment type="function">
    <text evidence="1">Presumably involved in the processing and regular turnover of intracellular proteins. Catalyzes the removal of unsubstituted N-terminal amino acids from various peptides.</text>
</comment>
<comment type="catalytic activity">
    <reaction evidence="1">
        <text>Release of an N-terminal amino acid, Xaa-|-Yaa-, in which Xaa is preferably Leu, but may be other amino acids including Pro although not Arg or Lys, and Yaa may be Pro. Amino acid amides and methyl esters are also readily hydrolyzed, but rates on arylamides are exceedingly low.</text>
        <dbReference type="EC" id="3.4.11.1"/>
    </reaction>
</comment>
<comment type="catalytic activity">
    <reaction evidence="1">
        <text>Release of an N-terminal amino acid, preferentially leucine, but not glutamic or aspartic acids.</text>
        <dbReference type="EC" id="3.4.11.10"/>
    </reaction>
</comment>
<comment type="cofactor">
    <cofactor evidence="1">
        <name>Mn(2+)</name>
        <dbReference type="ChEBI" id="CHEBI:29035"/>
    </cofactor>
    <text evidence="1">Binds 2 manganese ions per subunit.</text>
</comment>
<comment type="subcellular location">
    <subcellularLocation>
        <location evidence="1">Cytoplasm</location>
    </subcellularLocation>
</comment>
<comment type="similarity">
    <text evidence="1">Belongs to the peptidase M17 family.</text>
</comment>
<evidence type="ECO:0000255" key="1">
    <source>
        <dbReference type="HAMAP-Rule" id="MF_00181"/>
    </source>
</evidence>
<accession>A1UIA8</accession>
<dbReference type="EC" id="3.4.11.1" evidence="1"/>
<dbReference type="EC" id="3.4.11.10" evidence="1"/>
<dbReference type="EMBL" id="CP000518">
    <property type="protein sequence ID" value="ABL92566.1"/>
    <property type="molecule type" value="Genomic_DNA"/>
</dbReference>
<dbReference type="SMR" id="A1UIA8"/>
<dbReference type="STRING" id="189918.Mkms_3372"/>
<dbReference type="KEGG" id="mkm:Mkms_3372"/>
<dbReference type="HOGENOM" id="CLU_013734_2_0_11"/>
<dbReference type="GO" id="GO:0005737">
    <property type="term" value="C:cytoplasm"/>
    <property type="evidence" value="ECO:0007669"/>
    <property type="project" value="UniProtKB-SubCell"/>
</dbReference>
<dbReference type="GO" id="GO:0030145">
    <property type="term" value="F:manganese ion binding"/>
    <property type="evidence" value="ECO:0007669"/>
    <property type="project" value="UniProtKB-UniRule"/>
</dbReference>
<dbReference type="GO" id="GO:0070006">
    <property type="term" value="F:metalloaminopeptidase activity"/>
    <property type="evidence" value="ECO:0007669"/>
    <property type="project" value="InterPro"/>
</dbReference>
<dbReference type="GO" id="GO:0006508">
    <property type="term" value="P:proteolysis"/>
    <property type="evidence" value="ECO:0007669"/>
    <property type="project" value="UniProtKB-KW"/>
</dbReference>
<dbReference type="CDD" id="cd00433">
    <property type="entry name" value="Peptidase_M17"/>
    <property type="match status" value="1"/>
</dbReference>
<dbReference type="Gene3D" id="3.40.220.10">
    <property type="entry name" value="Leucine Aminopeptidase, subunit E, domain 1"/>
    <property type="match status" value="1"/>
</dbReference>
<dbReference type="Gene3D" id="3.40.630.10">
    <property type="entry name" value="Zn peptidases"/>
    <property type="match status" value="1"/>
</dbReference>
<dbReference type="HAMAP" id="MF_00181">
    <property type="entry name" value="Cytosol_peptidase_M17"/>
    <property type="match status" value="1"/>
</dbReference>
<dbReference type="InterPro" id="IPR011356">
    <property type="entry name" value="Leucine_aapep/pepB"/>
</dbReference>
<dbReference type="InterPro" id="IPR043472">
    <property type="entry name" value="Macro_dom-like"/>
</dbReference>
<dbReference type="InterPro" id="IPR000819">
    <property type="entry name" value="Peptidase_M17_C"/>
</dbReference>
<dbReference type="InterPro" id="IPR023042">
    <property type="entry name" value="Peptidase_M17_leu_NH2_pept"/>
</dbReference>
<dbReference type="InterPro" id="IPR008283">
    <property type="entry name" value="Peptidase_M17_N"/>
</dbReference>
<dbReference type="NCBIfam" id="NF002073">
    <property type="entry name" value="PRK00913.1-2"/>
    <property type="match status" value="1"/>
</dbReference>
<dbReference type="PANTHER" id="PTHR11963:SF23">
    <property type="entry name" value="CYTOSOL AMINOPEPTIDASE"/>
    <property type="match status" value="1"/>
</dbReference>
<dbReference type="PANTHER" id="PTHR11963">
    <property type="entry name" value="LEUCINE AMINOPEPTIDASE-RELATED"/>
    <property type="match status" value="1"/>
</dbReference>
<dbReference type="Pfam" id="PF00883">
    <property type="entry name" value="Peptidase_M17"/>
    <property type="match status" value="1"/>
</dbReference>
<dbReference type="Pfam" id="PF02789">
    <property type="entry name" value="Peptidase_M17_N"/>
    <property type="match status" value="1"/>
</dbReference>
<dbReference type="PRINTS" id="PR00481">
    <property type="entry name" value="LAMNOPPTDASE"/>
</dbReference>
<dbReference type="SUPFAM" id="SSF52949">
    <property type="entry name" value="Macro domain-like"/>
    <property type="match status" value="1"/>
</dbReference>
<dbReference type="SUPFAM" id="SSF53187">
    <property type="entry name" value="Zn-dependent exopeptidases"/>
    <property type="match status" value="1"/>
</dbReference>
<dbReference type="PROSITE" id="PS00631">
    <property type="entry name" value="CYTOSOL_AP"/>
    <property type="match status" value="1"/>
</dbReference>
<keyword id="KW-0031">Aminopeptidase</keyword>
<keyword id="KW-0963">Cytoplasm</keyword>
<keyword id="KW-0378">Hydrolase</keyword>
<keyword id="KW-0464">Manganese</keyword>
<keyword id="KW-0479">Metal-binding</keyword>
<keyword id="KW-0645">Protease</keyword>
<proteinExistence type="inferred from homology"/>